<feature type="chain" id="PRO_0000208421" description="Acetyl-coenzyme A synthetase 2">
    <location>
        <begin position="1"/>
        <end position="683"/>
    </location>
</feature>
<feature type="binding site" evidence="1">
    <location>
        <begin position="206"/>
        <end position="209"/>
    </location>
    <ligand>
        <name>CoA</name>
        <dbReference type="ChEBI" id="CHEBI:57287"/>
    </ligand>
</feature>
<feature type="binding site" evidence="1">
    <location>
        <position position="325"/>
    </location>
    <ligand>
        <name>CoA</name>
        <dbReference type="ChEBI" id="CHEBI:57287"/>
    </ligand>
</feature>
<feature type="binding site" evidence="1">
    <location>
        <begin position="401"/>
        <end position="403"/>
    </location>
    <ligand>
        <name>ATP</name>
        <dbReference type="ChEBI" id="CHEBI:30616"/>
    </ligand>
</feature>
<feature type="binding site" evidence="1">
    <location>
        <begin position="425"/>
        <end position="430"/>
    </location>
    <ligand>
        <name>AMP</name>
        <dbReference type="ChEBI" id="CHEBI:456215"/>
    </ligand>
</feature>
<feature type="binding site" evidence="1">
    <location>
        <begin position="425"/>
        <end position="430"/>
    </location>
    <ligand>
        <name>ATP</name>
        <dbReference type="ChEBI" id="CHEBI:30616"/>
    </ligand>
</feature>
<feature type="binding site" evidence="1">
    <location>
        <position position="516"/>
    </location>
    <ligand>
        <name>AMP</name>
        <dbReference type="ChEBI" id="CHEBI:456215"/>
    </ligand>
</feature>
<feature type="binding site" evidence="1">
    <location>
        <position position="516"/>
    </location>
    <ligand>
        <name>ATP</name>
        <dbReference type="ChEBI" id="CHEBI:30616"/>
    </ligand>
</feature>
<feature type="binding site" evidence="1">
    <location>
        <position position="531"/>
    </location>
    <ligand>
        <name>AMP</name>
        <dbReference type="ChEBI" id="CHEBI:456215"/>
    </ligand>
</feature>
<feature type="binding site" evidence="1">
    <location>
        <position position="531"/>
    </location>
    <ligand>
        <name>ATP</name>
        <dbReference type="ChEBI" id="CHEBI:30616"/>
    </ligand>
</feature>
<feature type="binding site" evidence="1">
    <location>
        <position position="539"/>
    </location>
    <ligand>
        <name>CoA</name>
        <dbReference type="ChEBI" id="CHEBI:57287"/>
    </ligand>
</feature>
<feature type="binding site" evidence="1">
    <location>
        <position position="542"/>
    </location>
    <ligand>
        <name>ATP</name>
        <dbReference type="ChEBI" id="CHEBI:30616"/>
    </ligand>
</feature>
<feature type="binding site" evidence="1">
    <location>
        <position position="612"/>
    </location>
    <ligand>
        <name>CoA</name>
        <dbReference type="ChEBI" id="CHEBI:57287"/>
    </ligand>
</feature>
<feature type="modified residue" description="Phosphoserine" evidence="8">
    <location>
        <position position="679"/>
    </location>
</feature>
<feature type="cross-link" description="Glycyl lysine isopeptide (Lys-Gly) (interchain with G-Cter in ubiquitin)" evidence="2">
    <location>
        <position position="506"/>
    </location>
</feature>
<sequence>MTIKEHKVVYEAHNVKALKAPQHFYNSQPGKGYVTDMQHYQEMYQQSINEPEKFFDKMAKEYLHWDAPYTKVQSGSLNNGDVAWFLNGKLNASYNCVDRHAFANPDKPALIYEADDESDNKIITFGELLRKVSQIAGVLKSWGVKKGDTVAIYLPMIPEAVIAMLAVARIGAIHSVVFAGFSAGSLKDRVVDANSKVVITCDEGKRGGKTINTKKIVDEGLNGVDLVSRILVFQRTGTEGIPMKAGRDYWWHEEAAKQRTYLPPVSCDAEDPLFLLYTSGSTGSPKGVVHTTGGYLLGAALTTRYVFDIHPEDVLFTAGDVGWITGHTYALYGPLTLGTASIIFESTPAYPDYGRYWRIIQRHKATHFYVAPTALRLIKRVGEAEIAKYDTSSLRVLGSVGEPISPDLWEWYHEKVGNKNCVICDTMWQTESGSHLIAPLAGAVPTKPGSATVPFFGINACIIDPVTGVELEGNDVEGVLAVKSPWPSMARSVWNHHDRYMDTYLKPYPGHYFTGDGAGRDHDGYYWIRGRVDDVVNVSGHRLSTSEIEASISNHENVSEAAVVGIPDELTGQTVVAYVSLKDGYLQNNATEGDAEHITPDNLRRELILQVRGEIGPFASPKTIILVRDLPRTRSGKIMRRVLRKVASNEAEQLGDLTTLANPEVVPAIISAVENQFFSQKKK</sequence>
<name>ACS2_YEAST</name>
<dbReference type="EC" id="6.2.1.1" evidence="5"/>
<dbReference type="EMBL" id="S79456">
    <property type="protein sequence ID" value="AAB35143.1"/>
    <property type="molecule type" value="Genomic_DNA"/>
</dbReference>
<dbReference type="EMBL" id="U53879">
    <property type="protein sequence ID" value="AAB82387.1"/>
    <property type="molecule type" value="Genomic_DNA"/>
</dbReference>
<dbReference type="EMBL" id="Z73325">
    <property type="protein sequence ID" value="CAA97725.1"/>
    <property type="molecule type" value="Genomic_DNA"/>
</dbReference>
<dbReference type="EMBL" id="BK006945">
    <property type="protein sequence ID" value="DAA09464.1"/>
    <property type="molecule type" value="Genomic_DNA"/>
</dbReference>
<dbReference type="PIR" id="S65002">
    <property type="entry name" value="S65002"/>
</dbReference>
<dbReference type="RefSeq" id="NP_013254.1">
    <property type="nucleotide sequence ID" value="NM_001182040.1"/>
</dbReference>
<dbReference type="SMR" id="P52910"/>
<dbReference type="BioGRID" id="31422">
    <property type="interactions" value="367"/>
</dbReference>
<dbReference type="ComplexPortal" id="CPX-9181">
    <property type="entry name" value="SESAME metabolic enzyme complex"/>
</dbReference>
<dbReference type="DIP" id="DIP-992N"/>
<dbReference type="FunCoup" id="P52910">
    <property type="interactions" value="963"/>
</dbReference>
<dbReference type="IntAct" id="P52910">
    <property type="interactions" value="47"/>
</dbReference>
<dbReference type="MINT" id="P52910"/>
<dbReference type="STRING" id="4932.YLR153C"/>
<dbReference type="iPTMnet" id="P52910"/>
<dbReference type="PaxDb" id="4932-YLR153C"/>
<dbReference type="PeptideAtlas" id="P52910"/>
<dbReference type="EnsemblFungi" id="YLR153C_mRNA">
    <property type="protein sequence ID" value="YLR153C"/>
    <property type="gene ID" value="YLR153C"/>
</dbReference>
<dbReference type="GeneID" id="850846"/>
<dbReference type="KEGG" id="sce:YLR153C"/>
<dbReference type="AGR" id="SGD:S000004143"/>
<dbReference type="SGD" id="S000004143">
    <property type="gene designation" value="ACS2"/>
</dbReference>
<dbReference type="VEuPathDB" id="FungiDB:YLR153C"/>
<dbReference type="eggNOG" id="KOG1175">
    <property type="taxonomic scope" value="Eukaryota"/>
</dbReference>
<dbReference type="GeneTree" id="ENSGT00940000176537"/>
<dbReference type="HOGENOM" id="CLU_000022_3_6_1"/>
<dbReference type="InParanoid" id="P52910"/>
<dbReference type="OMA" id="TVHTKKI"/>
<dbReference type="OrthoDB" id="1706066at2759"/>
<dbReference type="BioCyc" id="MetaCyc:YLR153C-MONOMER"/>
<dbReference type="BioCyc" id="YEAST:YLR153C-MONOMER"/>
<dbReference type="BRENDA" id="6.2.1.1">
    <property type="organism ID" value="984"/>
</dbReference>
<dbReference type="Reactome" id="R-SCE-2151201">
    <property type="pathway name" value="Transcriptional activation of mitochondrial biogenesis"/>
</dbReference>
<dbReference type="Reactome" id="R-SCE-71384">
    <property type="pathway name" value="Ethanol oxidation"/>
</dbReference>
<dbReference type="SABIO-RK" id="P52910"/>
<dbReference type="UniPathway" id="UPA00231"/>
<dbReference type="BioGRID-ORCS" id="850846">
    <property type="hits" value="7 hits in 10 CRISPR screens"/>
</dbReference>
<dbReference type="PRO" id="PR:P52910"/>
<dbReference type="Proteomes" id="UP000002311">
    <property type="component" value="Chromosome XII"/>
</dbReference>
<dbReference type="RNAct" id="P52910">
    <property type="molecule type" value="protein"/>
</dbReference>
<dbReference type="GO" id="GO:0005829">
    <property type="term" value="C:cytosol"/>
    <property type="evidence" value="ECO:0000314"/>
    <property type="project" value="SGD"/>
</dbReference>
<dbReference type="GO" id="GO:0005730">
    <property type="term" value="C:nucleolus"/>
    <property type="evidence" value="ECO:0000314"/>
    <property type="project" value="SGD"/>
</dbReference>
<dbReference type="GO" id="GO:0005634">
    <property type="term" value="C:nucleus"/>
    <property type="evidence" value="ECO:0000314"/>
    <property type="project" value="SGD"/>
</dbReference>
<dbReference type="GO" id="GO:0003987">
    <property type="term" value="F:acetate-CoA ligase activity"/>
    <property type="evidence" value="ECO:0000314"/>
    <property type="project" value="SGD"/>
</dbReference>
<dbReference type="GO" id="GO:0016880">
    <property type="term" value="F:acid-ammonia (or amide) ligase activity"/>
    <property type="evidence" value="ECO:0000314"/>
    <property type="project" value="SGD"/>
</dbReference>
<dbReference type="GO" id="GO:0016208">
    <property type="term" value="F:AMP binding"/>
    <property type="evidence" value="ECO:0007669"/>
    <property type="project" value="InterPro"/>
</dbReference>
<dbReference type="GO" id="GO:0005524">
    <property type="term" value="F:ATP binding"/>
    <property type="evidence" value="ECO:0007669"/>
    <property type="project" value="UniProtKB-KW"/>
</dbReference>
<dbReference type="GO" id="GO:0006085">
    <property type="term" value="P:acetyl-CoA biosynthetic process"/>
    <property type="evidence" value="ECO:0000314"/>
    <property type="project" value="SGD"/>
</dbReference>
<dbReference type="GO" id="GO:0019427">
    <property type="term" value="P:acetyl-CoA biosynthetic process from acetate"/>
    <property type="evidence" value="ECO:0007669"/>
    <property type="project" value="InterPro"/>
</dbReference>
<dbReference type="GO" id="GO:0006090">
    <property type="term" value="P:pyruvate metabolic process"/>
    <property type="evidence" value="ECO:0007669"/>
    <property type="project" value="UniProtKB-UniPathway"/>
</dbReference>
<dbReference type="CDD" id="cd05966">
    <property type="entry name" value="ACS"/>
    <property type="match status" value="1"/>
</dbReference>
<dbReference type="FunFam" id="3.30.300.30:FF:000004">
    <property type="entry name" value="Acetyl-coenzyme A synthetase"/>
    <property type="match status" value="1"/>
</dbReference>
<dbReference type="FunFam" id="3.40.50.12780:FF:000001">
    <property type="entry name" value="Acetyl-coenzyme A synthetase"/>
    <property type="match status" value="1"/>
</dbReference>
<dbReference type="Gene3D" id="3.30.300.30">
    <property type="match status" value="1"/>
</dbReference>
<dbReference type="Gene3D" id="3.40.50.12780">
    <property type="entry name" value="N-terminal domain of ligase-like"/>
    <property type="match status" value="1"/>
</dbReference>
<dbReference type="InterPro" id="IPR011904">
    <property type="entry name" value="Ac_CoA_lig"/>
</dbReference>
<dbReference type="InterPro" id="IPR032387">
    <property type="entry name" value="ACAS_N"/>
</dbReference>
<dbReference type="InterPro" id="IPR025110">
    <property type="entry name" value="AMP-bd_C"/>
</dbReference>
<dbReference type="InterPro" id="IPR045851">
    <property type="entry name" value="AMP-bd_C_sf"/>
</dbReference>
<dbReference type="InterPro" id="IPR020845">
    <property type="entry name" value="AMP-binding_CS"/>
</dbReference>
<dbReference type="InterPro" id="IPR000873">
    <property type="entry name" value="AMP-dep_synth/lig_dom"/>
</dbReference>
<dbReference type="InterPro" id="IPR042099">
    <property type="entry name" value="ANL_N_sf"/>
</dbReference>
<dbReference type="NCBIfam" id="TIGR02188">
    <property type="entry name" value="Ac_CoA_lig_AcsA"/>
    <property type="match status" value="1"/>
</dbReference>
<dbReference type="NCBIfam" id="NF001208">
    <property type="entry name" value="PRK00174.1"/>
    <property type="match status" value="1"/>
</dbReference>
<dbReference type="PANTHER" id="PTHR24095">
    <property type="entry name" value="ACETYL-COENZYME A SYNTHETASE"/>
    <property type="match status" value="1"/>
</dbReference>
<dbReference type="PANTHER" id="PTHR24095:SF245">
    <property type="entry name" value="ACETYL-COENZYME A SYNTHETASE 2"/>
    <property type="match status" value="1"/>
</dbReference>
<dbReference type="Pfam" id="PF16177">
    <property type="entry name" value="ACAS_N"/>
    <property type="match status" value="1"/>
</dbReference>
<dbReference type="Pfam" id="PF00501">
    <property type="entry name" value="AMP-binding"/>
    <property type="match status" value="1"/>
</dbReference>
<dbReference type="Pfam" id="PF13193">
    <property type="entry name" value="AMP-binding_C"/>
    <property type="match status" value="1"/>
</dbReference>
<dbReference type="SUPFAM" id="SSF56801">
    <property type="entry name" value="Acetyl-CoA synthetase-like"/>
    <property type="match status" value="1"/>
</dbReference>
<dbReference type="PROSITE" id="PS00455">
    <property type="entry name" value="AMP_BINDING"/>
    <property type="match status" value="1"/>
</dbReference>
<accession>P52910</accession>
<accession>D6VYE8</accession>
<keyword id="KW-0067">ATP-binding</keyword>
<keyword id="KW-0963">Cytoplasm</keyword>
<keyword id="KW-1017">Isopeptide bond</keyword>
<keyword id="KW-0436">Ligase</keyword>
<keyword id="KW-0547">Nucleotide-binding</keyword>
<keyword id="KW-0539">Nucleus</keyword>
<keyword id="KW-0597">Phosphoprotein</keyword>
<keyword id="KW-1185">Reference proteome</keyword>
<keyword id="KW-0832">Ubl conjugation</keyword>
<organism>
    <name type="scientific">Saccharomyces cerevisiae (strain ATCC 204508 / S288c)</name>
    <name type="common">Baker's yeast</name>
    <dbReference type="NCBI Taxonomy" id="559292"/>
    <lineage>
        <taxon>Eukaryota</taxon>
        <taxon>Fungi</taxon>
        <taxon>Dikarya</taxon>
        <taxon>Ascomycota</taxon>
        <taxon>Saccharomycotina</taxon>
        <taxon>Saccharomycetes</taxon>
        <taxon>Saccharomycetales</taxon>
        <taxon>Saccharomycetaceae</taxon>
        <taxon>Saccharomyces</taxon>
    </lineage>
</organism>
<evidence type="ECO:0000250" key="1">
    <source>
        <dbReference type="UniProtKB" id="Q8ZKF6"/>
    </source>
</evidence>
<evidence type="ECO:0000269" key="2">
    <source>
    </source>
</evidence>
<evidence type="ECO:0000269" key="3">
    <source>
    </source>
</evidence>
<evidence type="ECO:0000269" key="4">
    <source>
    </source>
</evidence>
<evidence type="ECO:0000269" key="5">
    <source>
    </source>
</evidence>
<evidence type="ECO:0000303" key="6">
    <source>
    </source>
</evidence>
<evidence type="ECO:0000305" key="7"/>
<evidence type="ECO:0007744" key="8">
    <source>
    </source>
</evidence>
<reference key="1">
    <citation type="journal article" date="1995" name="Eur. J. Biochem.">
        <title>ACS2, a Saccharomyces cerevisiae gene encoding acetyl-coenzyme A synthetase, essential for growth on glucose.</title>
        <authorList>
            <person name="van den Berg M.A."/>
            <person name="de Steensma H.Y."/>
        </authorList>
    </citation>
    <scope>NUCLEOTIDE SEQUENCE [GENOMIC DNA]</scope>
</reference>
<reference key="2">
    <citation type="journal article" date="1997" name="Nature">
        <title>The nucleotide sequence of Saccharomyces cerevisiae chromosome XII.</title>
        <authorList>
            <person name="Johnston M."/>
            <person name="Hillier L.W."/>
            <person name="Riles L."/>
            <person name="Albermann K."/>
            <person name="Andre B."/>
            <person name="Ansorge W."/>
            <person name="Benes V."/>
            <person name="Brueckner M."/>
            <person name="Delius H."/>
            <person name="Dubois E."/>
            <person name="Duesterhoeft A."/>
            <person name="Entian K.-D."/>
            <person name="Floeth M."/>
            <person name="Goffeau A."/>
            <person name="Hebling U."/>
            <person name="Heumann K."/>
            <person name="Heuss-Neitzel D."/>
            <person name="Hilbert H."/>
            <person name="Hilger F."/>
            <person name="Kleine K."/>
            <person name="Koetter P."/>
            <person name="Louis E.J."/>
            <person name="Messenguy F."/>
            <person name="Mewes H.-W."/>
            <person name="Miosga T."/>
            <person name="Moestl D."/>
            <person name="Mueller-Auer S."/>
            <person name="Nentwich U."/>
            <person name="Obermaier B."/>
            <person name="Piravandi E."/>
            <person name="Pohl T.M."/>
            <person name="Portetelle D."/>
            <person name="Purnelle B."/>
            <person name="Rechmann S."/>
            <person name="Rieger M."/>
            <person name="Rinke M."/>
            <person name="Rose M."/>
            <person name="Scharfe M."/>
            <person name="Scherens B."/>
            <person name="Scholler P."/>
            <person name="Schwager C."/>
            <person name="Schwarz S."/>
            <person name="Underwood A.P."/>
            <person name="Urrestarazu L.A."/>
            <person name="Vandenbol M."/>
            <person name="Verhasselt P."/>
            <person name="Vierendeels F."/>
            <person name="Voet M."/>
            <person name="Volckaert G."/>
            <person name="Voss H."/>
            <person name="Wambutt R."/>
            <person name="Wedler E."/>
            <person name="Wedler H."/>
            <person name="Zimmermann F.K."/>
            <person name="Zollner A."/>
            <person name="Hani J."/>
            <person name="Hoheisel J.D."/>
        </authorList>
    </citation>
    <scope>NUCLEOTIDE SEQUENCE [LARGE SCALE GENOMIC DNA]</scope>
    <source>
        <strain>ATCC 204508 / S288c</strain>
    </source>
</reference>
<reference key="3">
    <citation type="journal article" date="2014" name="G3 (Bethesda)">
        <title>The reference genome sequence of Saccharomyces cerevisiae: Then and now.</title>
        <authorList>
            <person name="Engel S.R."/>
            <person name="Dietrich F.S."/>
            <person name="Fisk D.G."/>
            <person name="Binkley G."/>
            <person name="Balakrishnan R."/>
            <person name="Costanzo M.C."/>
            <person name="Dwight S.S."/>
            <person name="Hitz B.C."/>
            <person name="Karra K."/>
            <person name="Nash R.S."/>
            <person name="Weng S."/>
            <person name="Wong E.D."/>
            <person name="Lloyd P."/>
            <person name="Skrzypek M.S."/>
            <person name="Miyasato S.R."/>
            <person name="Simison M."/>
            <person name="Cherry J.M."/>
        </authorList>
    </citation>
    <scope>GENOME REANNOTATION</scope>
    <source>
        <strain>ATCC 204508 / S288c</strain>
    </source>
</reference>
<reference key="4">
    <citation type="journal article" date="1996" name="J. Biol. Chem.">
        <title>The two acetyl-coenzyme A synthetases of Saccharomyces cerevisiae differ with respect to kinetic properties and transcriptional regulation.</title>
        <authorList>
            <person name="van den Berg M.A."/>
            <person name="de Jong-Gubbels P."/>
            <person name="Kortland C.J."/>
            <person name="van Dijken J.P."/>
            <person name="Pronk J.T."/>
            <person name="Steensma H.Y."/>
        </authorList>
    </citation>
    <scope>FUNCTION</scope>
    <scope>CATALYTIC ACTIVITY</scope>
    <scope>BIOPHYSICOCHEMICAL PROPERTIES</scope>
    <scope>INDUCTION</scope>
</reference>
<reference key="5">
    <citation type="journal article" date="2003" name="Nature">
        <title>Global analysis of protein localization in budding yeast.</title>
        <authorList>
            <person name="Huh W.-K."/>
            <person name="Falvo J.V."/>
            <person name="Gerke L.C."/>
            <person name="Carroll A.S."/>
            <person name="Howson R.W."/>
            <person name="Weissman J.S."/>
            <person name="O'Shea E.K."/>
        </authorList>
    </citation>
    <scope>SUBCELLULAR LOCATION [LARGE SCALE ANALYSIS]</scope>
</reference>
<reference key="6">
    <citation type="journal article" date="2003" name="Nature">
        <title>Global analysis of protein expression in yeast.</title>
        <authorList>
            <person name="Ghaemmaghami S."/>
            <person name="Huh W.-K."/>
            <person name="Bower K."/>
            <person name="Howson R.W."/>
            <person name="Belle A."/>
            <person name="Dephoure N."/>
            <person name="O'Shea E.K."/>
            <person name="Weissman J.S."/>
        </authorList>
    </citation>
    <scope>LEVEL OF PROTEIN EXPRESSION [LARGE SCALE ANALYSIS]</scope>
</reference>
<reference key="7">
    <citation type="journal article" date="2003" name="Nat. Biotechnol.">
        <title>A proteomics approach to understanding protein ubiquitination.</title>
        <authorList>
            <person name="Peng J."/>
            <person name="Schwartz D."/>
            <person name="Elias J.E."/>
            <person name="Thoreen C.C."/>
            <person name="Cheng D."/>
            <person name="Marsischky G."/>
            <person name="Roelofs J."/>
            <person name="Finley D."/>
            <person name="Gygi S.P."/>
        </authorList>
    </citation>
    <scope>UBIQUITINATION [LARGE SCALE ANALYSIS] AT LYS-506</scope>
    <scope>IDENTIFICATION BY MASS SPECTROMETRY</scope>
    <source>
        <strain>SUB592</strain>
    </source>
</reference>
<reference key="8">
    <citation type="journal article" date="2006" name="Mol. Cell">
        <title>Nucleocytosolic acetyl-coenzyme a synthetase is required for histone acetylation and global transcription.</title>
        <authorList>
            <person name="Takahashi H."/>
            <person name="McCaffery J.M."/>
            <person name="Irizarry R.A."/>
            <person name="Boeke J.D."/>
        </authorList>
    </citation>
    <scope>FUNCTION</scope>
    <scope>SUBCELLULAR LOCATION</scope>
</reference>
<reference key="9">
    <citation type="journal article" date="2008" name="Mol. Cell. Proteomics">
        <title>A multidimensional chromatography technology for in-depth phosphoproteome analysis.</title>
        <authorList>
            <person name="Albuquerque C.P."/>
            <person name="Smolka M.B."/>
            <person name="Payne S.H."/>
            <person name="Bafna V."/>
            <person name="Eng J."/>
            <person name="Zhou H."/>
        </authorList>
    </citation>
    <scope>PHOSPHORYLATION [LARGE SCALE ANALYSIS] AT SER-679</scope>
    <scope>IDENTIFICATION BY MASS SPECTROMETRY [LARGE SCALE ANALYSIS]</scope>
</reference>
<gene>
    <name evidence="6" type="primary">ACS2</name>
    <name type="ordered locus">YLR153C</name>
    <name type="ORF">L9634.10</name>
</gene>
<comment type="function">
    <text evidence="4 5">Catalyzes the production of acetyl-CoA. Provides the acetyl-CoA source for histone acetylation in the nucleus. 'Anaerobic' isozyme of acetyl-coenzyme A synthetase, which is required for growth on fermentable carbon sources such as glucose. May be involved in the PDH (pyruvate dehydrogenase complex) bypass.</text>
</comment>
<comment type="catalytic activity">
    <reaction evidence="5">
        <text>acetate + ATP + CoA = acetyl-CoA + AMP + diphosphate</text>
        <dbReference type="Rhea" id="RHEA:23176"/>
        <dbReference type="ChEBI" id="CHEBI:30089"/>
        <dbReference type="ChEBI" id="CHEBI:30616"/>
        <dbReference type="ChEBI" id="CHEBI:33019"/>
        <dbReference type="ChEBI" id="CHEBI:57287"/>
        <dbReference type="ChEBI" id="CHEBI:57288"/>
        <dbReference type="ChEBI" id="CHEBI:456215"/>
        <dbReference type="EC" id="6.2.1.1"/>
    </reaction>
</comment>
<comment type="biophysicochemical properties">
    <kinetics>
        <KM evidence="5">8.8 mM for acetate</KM>
        <KM evidence="5">1.3 mM for ATP</KM>
        <Vmax evidence="5">0.34 umol/min/mg enzyme</Vmax>
    </kinetics>
</comment>
<comment type="pathway">
    <text>Carbohydrate metabolism; pyruvate metabolism.</text>
</comment>
<comment type="subcellular location">
    <subcellularLocation>
        <location>Cytoplasm</location>
    </subcellularLocation>
    <subcellularLocation>
        <location>Nucleus</location>
    </subcellularLocation>
    <text>Predominantly nuclear.</text>
</comment>
<comment type="miscellaneous">
    <text evidence="3">Present with 225000 molecules/cell in log phase SD medium.</text>
</comment>
<comment type="similarity">
    <text evidence="7">Belongs to the ATP-dependent AMP-binding enzyme family.</text>
</comment>
<protein>
    <recommendedName>
        <fullName evidence="6">Acetyl-coenzyme A synthetase 2</fullName>
        <ecNumber evidence="5">6.2.1.1</ecNumber>
    </recommendedName>
    <alternativeName>
        <fullName evidence="6">Acetate--CoA ligase 2</fullName>
    </alternativeName>
    <alternativeName>
        <fullName evidence="6">Acyl-activating enzyme 2</fullName>
    </alternativeName>
</protein>
<proteinExistence type="evidence at protein level"/>